<comment type="function">
    <text evidence="1">Is required not only for elongation of protein synthesis but also for the initiation of all mRNA translation through initiator tRNA(fMet) aminoacylation.</text>
</comment>
<comment type="catalytic activity">
    <reaction evidence="1">
        <text>tRNA(Met) + L-methionine + ATP = L-methionyl-tRNA(Met) + AMP + diphosphate</text>
        <dbReference type="Rhea" id="RHEA:13481"/>
        <dbReference type="Rhea" id="RHEA-COMP:9667"/>
        <dbReference type="Rhea" id="RHEA-COMP:9698"/>
        <dbReference type="ChEBI" id="CHEBI:30616"/>
        <dbReference type="ChEBI" id="CHEBI:33019"/>
        <dbReference type="ChEBI" id="CHEBI:57844"/>
        <dbReference type="ChEBI" id="CHEBI:78442"/>
        <dbReference type="ChEBI" id="CHEBI:78530"/>
        <dbReference type="ChEBI" id="CHEBI:456215"/>
        <dbReference type="EC" id="6.1.1.10"/>
    </reaction>
</comment>
<comment type="cofactor">
    <cofactor evidence="1">
        <name>Zn(2+)</name>
        <dbReference type="ChEBI" id="CHEBI:29105"/>
    </cofactor>
    <text evidence="1">Binds 1 zinc ion per subunit.</text>
</comment>
<comment type="subunit">
    <text evidence="1">Homodimer.</text>
</comment>
<comment type="subcellular location">
    <subcellularLocation>
        <location evidence="1">Cytoplasm</location>
    </subcellularLocation>
</comment>
<comment type="similarity">
    <text evidence="1">Belongs to the class-I aminoacyl-tRNA synthetase family. MetG type 1 subfamily.</text>
</comment>
<evidence type="ECO:0000255" key="1">
    <source>
        <dbReference type="HAMAP-Rule" id="MF_00098"/>
    </source>
</evidence>
<evidence type="ECO:0000256" key="2">
    <source>
        <dbReference type="SAM" id="MobiDB-lite"/>
    </source>
</evidence>
<evidence type="ECO:0007829" key="3">
    <source>
        <dbReference type="PDB" id="6WQT"/>
    </source>
</evidence>
<protein>
    <recommendedName>
        <fullName evidence="1">Methionine--tRNA ligase</fullName>
        <ecNumber evidence="1">6.1.1.10</ecNumber>
    </recommendedName>
    <alternativeName>
        <fullName evidence="1">Methionyl-tRNA synthetase</fullName>
        <shortName evidence="1">MetRS</shortName>
    </alternativeName>
</protein>
<proteinExistence type="evidence at protein level"/>
<feature type="chain" id="PRO_0000139175" description="Methionine--tRNA ligase">
    <location>
        <begin position="1"/>
        <end position="694"/>
    </location>
</feature>
<feature type="domain" description="tRNA-binding" evidence="1">
    <location>
        <begin position="591"/>
        <end position="694"/>
    </location>
</feature>
<feature type="region of interest" description="Disordered" evidence="2">
    <location>
        <begin position="550"/>
        <end position="577"/>
    </location>
</feature>
<feature type="short sequence motif" description="'HIGH' region">
    <location>
        <begin position="12"/>
        <end position="22"/>
    </location>
</feature>
<feature type="short sequence motif" description="'KMSKS' region">
    <location>
        <begin position="330"/>
        <end position="334"/>
    </location>
</feature>
<feature type="compositionally biased region" description="Low complexity" evidence="2">
    <location>
        <begin position="551"/>
        <end position="575"/>
    </location>
</feature>
<feature type="binding site" evidence="1">
    <location>
        <position position="143"/>
    </location>
    <ligand>
        <name>Zn(2+)</name>
        <dbReference type="ChEBI" id="CHEBI:29105"/>
    </ligand>
</feature>
<feature type="binding site" evidence="1">
    <location>
        <position position="146"/>
    </location>
    <ligand>
        <name>Zn(2+)</name>
        <dbReference type="ChEBI" id="CHEBI:29105"/>
    </ligand>
</feature>
<feature type="binding site" evidence="1">
    <location>
        <position position="156"/>
    </location>
    <ligand>
        <name>Zn(2+)</name>
        <dbReference type="ChEBI" id="CHEBI:29105"/>
    </ligand>
</feature>
<feature type="binding site" evidence="1">
    <location>
        <position position="159"/>
    </location>
    <ligand>
        <name>Zn(2+)</name>
        <dbReference type="ChEBI" id="CHEBI:29105"/>
    </ligand>
</feature>
<feature type="binding site" evidence="1">
    <location>
        <position position="333"/>
    </location>
    <ligand>
        <name>ATP</name>
        <dbReference type="ChEBI" id="CHEBI:30616"/>
    </ligand>
</feature>
<feature type="strand" evidence="3">
    <location>
        <begin position="5"/>
        <end position="9"/>
    </location>
</feature>
<feature type="helix" evidence="3">
    <location>
        <begin position="20"/>
        <end position="38"/>
    </location>
</feature>
<feature type="strand" evidence="3">
    <location>
        <begin position="43"/>
        <end position="50"/>
    </location>
</feature>
<feature type="helix" evidence="3">
    <location>
        <begin position="54"/>
        <end position="62"/>
    </location>
</feature>
<feature type="helix" evidence="3">
    <location>
        <begin position="67"/>
        <end position="84"/>
    </location>
</feature>
<feature type="strand" evidence="3">
    <location>
        <begin position="90"/>
        <end position="94"/>
    </location>
</feature>
<feature type="helix" evidence="3">
    <location>
        <begin position="98"/>
        <end position="113"/>
    </location>
</feature>
<feature type="strand" evidence="3">
    <location>
        <begin position="117"/>
        <end position="127"/>
    </location>
</feature>
<feature type="turn" evidence="3">
    <location>
        <begin position="128"/>
        <end position="131"/>
    </location>
</feature>
<feature type="helix" evidence="3">
    <location>
        <begin position="136"/>
        <end position="138"/>
    </location>
</feature>
<feature type="strand" evidence="3">
    <location>
        <begin position="139"/>
        <end position="142"/>
    </location>
</feature>
<feature type="turn" evidence="3">
    <location>
        <begin position="144"/>
        <end position="146"/>
    </location>
</feature>
<feature type="strand" evidence="3">
    <location>
        <begin position="149"/>
        <end position="152"/>
    </location>
</feature>
<feature type="turn" evidence="3">
    <location>
        <begin position="157"/>
        <end position="159"/>
    </location>
</feature>
<feature type="helix" evidence="3">
    <location>
        <begin position="165"/>
        <end position="167"/>
    </location>
</feature>
<feature type="strand" evidence="3">
    <location>
        <begin position="168"/>
        <end position="173"/>
    </location>
</feature>
<feature type="turn" evidence="3">
    <location>
        <begin position="174"/>
        <end position="176"/>
    </location>
</feature>
<feature type="strand" evidence="3">
    <location>
        <begin position="181"/>
        <end position="190"/>
    </location>
</feature>
<feature type="helix" evidence="3">
    <location>
        <begin position="192"/>
        <end position="195"/>
    </location>
</feature>
<feature type="helix" evidence="3">
    <location>
        <begin position="196"/>
        <end position="202"/>
    </location>
</feature>
<feature type="strand" evidence="3">
    <location>
        <begin position="205"/>
        <end position="208"/>
    </location>
</feature>
<feature type="helix" evidence="3">
    <location>
        <begin position="210"/>
        <end position="221"/>
    </location>
</feature>
<feature type="strand" evidence="3">
    <location>
        <begin position="232"/>
        <end position="236"/>
    </location>
</feature>
<feature type="strand" evidence="3">
    <location>
        <begin position="248"/>
        <end position="250"/>
    </location>
</feature>
<feature type="helix" evidence="3">
    <location>
        <begin position="252"/>
        <end position="271"/>
    </location>
</feature>
<feature type="helix" evidence="3">
    <location>
        <begin position="275"/>
        <end position="279"/>
    </location>
</feature>
<feature type="strand" evidence="3">
    <location>
        <begin position="286"/>
        <end position="292"/>
    </location>
</feature>
<feature type="helix" evidence="3">
    <location>
        <begin position="293"/>
        <end position="295"/>
    </location>
</feature>
<feature type="helix" evidence="3">
    <location>
        <begin position="296"/>
        <end position="300"/>
    </location>
</feature>
<feature type="helix" evidence="3">
    <location>
        <begin position="302"/>
        <end position="309"/>
    </location>
</feature>
<feature type="strand" evidence="3">
    <location>
        <begin position="316"/>
        <end position="321"/>
    </location>
</feature>
<feature type="strand" evidence="3">
    <location>
        <begin position="324"/>
        <end position="326"/>
    </location>
</feature>
<feature type="turn" evidence="3">
    <location>
        <begin position="333"/>
        <end position="336"/>
    </location>
</feature>
<feature type="helix" evidence="3">
    <location>
        <begin position="341"/>
        <end position="346"/>
    </location>
</feature>
<feature type="helix" evidence="3">
    <location>
        <begin position="351"/>
        <end position="360"/>
    </location>
</feature>
<feature type="strand" evidence="3">
    <location>
        <begin position="364"/>
        <end position="367"/>
    </location>
</feature>
<feature type="strand" evidence="3">
    <location>
        <begin position="369"/>
        <end position="371"/>
    </location>
</feature>
<feature type="helix" evidence="3">
    <location>
        <begin position="373"/>
        <end position="384"/>
    </location>
</feature>
<feature type="turn" evidence="3">
    <location>
        <begin position="385"/>
        <end position="387"/>
    </location>
</feature>
<feature type="helix" evidence="3">
    <location>
        <begin position="388"/>
        <end position="403"/>
    </location>
</feature>
<feature type="helix" evidence="3">
    <location>
        <begin position="414"/>
        <end position="432"/>
    </location>
</feature>
<feature type="helix" evidence="3">
    <location>
        <begin position="436"/>
        <end position="457"/>
    </location>
</feature>
<feature type="helix" evidence="3">
    <location>
        <begin position="459"/>
        <end position="462"/>
    </location>
</feature>
<feature type="helix" evidence="3">
    <location>
        <begin position="469"/>
        <end position="490"/>
    </location>
</feature>
<feature type="turn" evidence="3">
    <location>
        <begin position="491"/>
        <end position="493"/>
    </location>
</feature>
<feature type="helix" evidence="3">
    <location>
        <begin position="495"/>
        <end position="504"/>
    </location>
</feature>
<feature type="helix" evidence="3">
    <location>
        <begin position="512"/>
        <end position="515"/>
    </location>
</feature>
<feature type="helix" evidence="3">
    <location>
        <begin position="536"/>
        <end position="545"/>
    </location>
</feature>
<accession>Q8PMP0</accession>
<gene>
    <name evidence="1" type="primary">metG</name>
    <name type="synonym">metS</name>
    <name type="ordered locus">XAC1386</name>
</gene>
<name>SYM_XANAC</name>
<dbReference type="EC" id="6.1.1.10" evidence="1"/>
<dbReference type="EMBL" id="AE008923">
    <property type="protein sequence ID" value="AAM36257.1"/>
    <property type="molecule type" value="Genomic_DNA"/>
</dbReference>
<dbReference type="RefSeq" id="WP_011050884.1">
    <property type="nucleotide sequence ID" value="NC_003919.1"/>
</dbReference>
<dbReference type="PDB" id="6WQ6">
    <property type="method" value="X-ray"/>
    <property type="resolution" value="1.70 A"/>
    <property type="chains" value="A=1-694"/>
</dbReference>
<dbReference type="PDB" id="6WQI">
    <property type="method" value="X-ray"/>
    <property type="resolution" value="2.00 A"/>
    <property type="chains" value="A/B=1-694"/>
</dbReference>
<dbReference type="PDB" id="6WQS">
    <property type="method" value="X-ray"/>
    <property type="resolution" value="2.00 A"/>
    <property type="chains" value="A=1-563"/>
</dbReference>
<dbReference type="PDB" id="6WQT">
    <property type="method" value="X-ray"/>
    <property type="resolution" value="1.65 A"/>
    <property type="chains" value="A=1-563"/>
</dbReference>
<dbReference type="PDBsum" id="6WQ6"/>
<dbReference type="PDBsum" id="6WQI"/>
<dbReference type="PDBsum" id="6WQS"/>
<dbReference type="PDBsum" id="6WQT"/>
<dbReference type="SMR" id="Q8PMP0"/>
<dbReference type="GeneID" id="66910553"/>
<dbReference type="KEGG" id="xac:XAC1386"/>
<dbReference type="eggNOG" id="COG0073">
    <property type="taxonomic scope" value="Bacteria"/>
</dbReference>
<dbReference type="eggNOG" id="COG0143">
    <property type="taxonomic scope" value="Bacteria"/>
</dbReference>
<dbReference type="HOGENOM" id="CLU_009710_7_0_6"/>
<dbReference type="Proteomes" id="UP000000576">
    <property type="component" value="Chromosome"/>
</dbReference>
<dbReference type="GO" id="GO:0005829">
    <property type="term" value="C:cytosol"/>
    <property type="evidence" value="ECO:0007669"/>
    <property type="project" value="TreeGrafter"/>
</dbReference>
<dbReference type="GO" id="GO:0005524">
    <property type="term" value="F:ATP binding"/>
    <property type="evidence" value="ECO:0007669"/>
    <property type="project" value="UniProtKB-UniRule"/>
</dbReference>
<dbReference type="GO" id="GO:0046872">
    <property type="term" value="F:metal ion binding"/>
    <property type="evidence" value="ECO:0007669"/>
    <property type="project" value="UniProtKB-KW"/>
</dbReference>
<dbReference type="GO" id="GO:0004825">
    <property type="term" value="F:methionine-tRNA ligase activity"/>
    <property type="evidence" value="ECO:0007669"/>
    <property type="project" value="UniProtKB-UniRule"/>
</dbReference>
<dbReference type="GO" id="GO:0000049">
    <property type="term" value="F:tRNA binding"/>
    <property type="evidence" value="ECO:0007669"/>
    <property type="project" value="UniProtKB-KW"/>
</dbReference>
<dbReference type="GO" id="GO:0006431">
    <property type="term" value="P:methionyl-tRNA aminoacylation"/>
    <property type="evidence" value="ECO:0007669"/>
    <property type="project" value="UniProtKB-UniRule"/>
</dbReference>
<dbReference type="CDD" id="cd07957">
    <property type="entry name" value="Anticodon_Ia_Met"/>
    <property type="match status" value="1"/>
</dbReference>
<dbReference type="CDD" id="cd00814">
    <property type="entry name" value="MetRS_core"/>
    <property type="match status" value="1"/>
</dbReference>
<dbReference type="CDD" id="cd02800">
    <property type="entry name" value="tRNA_bind_EcMetRS_like"/>
    <property type="match status" value="1"/>
</dbReference>
<dbReference type="FunFam" id="1.10.730.10:FF:000005">
    <property type="entry name" value="Methionine--tRNA ligase"/>
    <property type="match status" value="1"/>
</dbReference>
<dbReference type="FunFam" id="2.20.28.20:FF:000001">
    <property type="entry name" value="Methionine--tRNA ligase"/>
    <property type="match status" value="1"/>
</dbReference>
<dbReference type="FunFam" id="2.40.50.140:FF:000042">
    <property type="entry name" value="Methionine--tRNA ligase"/>
    <property type="match status" value="1"/>
</dbReference>
<dbReference type="Gene3D" id="3.40.50.620">
    <property type="entry name" value="HUPs"/>
    <property type="match status" value="1"/>
</dbReference>
<dbReference type="Gene3D" id="1.10.730.10">
    <property type="entry name" value="Isoleucyl-tRNA Synthetase, Domain 1"/>
    <property type="match status" value="1"/>
</dbReference>
<dbReference type="Gene3D" id="2.20.28.20">
    <property type="entry name" value="Methionyl-tRNA synthetase, Zn-domain"/>
    <property type="match status" value="1"/>
</dbReference>
<dbReference type="Gene3D" id="2.40.50.140">
    <property type="entry name" value="Nucleic acid-binding proteins"/>
    <property type="match status" value="1"/>
</dbReference>
<dbReference type="HAMAP" id="MF_00098">
    <property type="entry name" value="Met_tRNA_synth_type1"/>
    <property type="match status" value="1"/>
</dbReference>
<dbReference type="InterPro" id="IPR001412">
    <property type="entry name" value="aa-tRNA-synth_I_CS"/>
</dbReference>
<dbReference type="InterPro" id="IPR041872">
    <property type="entry name" value="Anticodon_Met"/>
</dbReference>
<dbReference type="InterPro" id="IPR004495">
    <property type="entry name" value="Met-tRNA-synth_bsu_C"/>
</dbReference>
<dbReference type="InterPro" id="IPR023458">
    <property type="entry name" value="Met-tRNA_ligase_1"/>
</dbReference>
<dbReference type="InterPro" id="IPR014758">
    <property type="entry name" value="Met-tRNA_synth"/>
</dbReference>
<dbReference type="InterPro" id="IPR015413">
    <property type="entry name" value="Methionyl/Leucyl_tRNA_Synth"/>
</dbReference>
<dbReference type="InterPro" id="IPR033911">
    <property type="entry name" value="MetRS_core"/>
</dbReference>
<dbReference type="InterPro" id="IPR029038">
    <property type="entry name" value="MetRS_Zn"/>
</dbReference>
<dbReference type="InterPro" id="IPR012340">
    <property type="entry name" value="NA-bd_OB-fold"/>
</dbReference>
<dbReference type="InterPro" id="IPR014729">
    <property type="entry name" value="Rossmann-like_a/b/a_fold"/>
</dbReference>
<dbReference type="InterPro" id="IPR002547">
    <property type="entry name" value="tRNA-bd_dom"/>
</dbReference>
<dbReference type="InterPro" id="IPR009080">
    <property type="entry name" value="tRNAsynth_Ia_anticodon-bd"/>
</dbReference>
<dbReference type="NCBIfam" id="TIGR00398">
    <property type="entry name" value="metG"/>
    <property type="match status" value="1"/>
</dbReference>
<dbReference type="NCBIfam" id="TIGR00399">
    <property type="entry name" value="metG_C_term"/>
    <property type="match status" value="1"/>
</dbReference>
<dbReference type="NCBIfam" id="NF001100">
    <property type="entry name" value="PRK00133.1"/>
    <property type="match status" value="1"/>
</dbReference>
<dbReference type="PANTHER" id="PTHR45765">
    <property type="entry name" value="METHIONINE--TRNA LIGASE"/>
    <property type="match status" value="1"/>
</dbReference>
<dbReference type="PANTHER" id="PTHR45765:SF1">
    <property type="entry name" value="METHIONINE--TRNA LIGASE, CYTOPLASMIC"/>
    <property type="match status" value="1"/>
</dbReference>
<dbReference type="Pfam" id="PF19303">
    <property type="entry name" value="Anticodon_3"/>
    <property type="match status" value="1"/>
</dbReference>
<dbReference type="Pfam" id="PF09334">
    <property type="entry name" value="tRNA-synt_1g"/>
    <property type="match status" value="1"/>
</dbReference>
<dbReference type="Pfam" id="PF01588">
    <property type="entry name" value="tRNA_bind"/>
    <property type="match status" value="1"/>
</dbReference>
<dbReference type="PRINTS" id="PR01041">
    <property type="entry name" value="TRNASYNTHMET"/>
</dbReference>
<dbReference type="SUPFAM" id="SSF47323">
    <property type="entry name" value="Anticodon-binding domain of a subclass of class I aminoacyl-tRNA synthetases"/>
    <property type="match status" value="1"/>
</dbReference>
<dbReference type="SUPFAM" id="SSF57770">
    <property type="entry name" value="Methionyl-tRNA synthetase (MetRS), Zn-domain"/>
    <property type="match status" value="1"/>
</dbReference>
<dbReference type="SUPFAM" id="SSF50249">
    <property type="entry name" value="Nucleic acid-binding proteins"/>
    <property type="match status" value="1"/>
</dbReference>
<dbReference type="SUPFAM" id="SSF52374">
    <property type="entry name" value="Nucleotidylyl transferase"/>
    <property type="match status" value="1"/>
</dbReference>
<dbReference type="PROSITE" id="PS00178">
    <property type="entry name" value="AA_TRNA_LIGASE_I"/>
    <property type="match status" value="1"/>
</dbReference>
<dbReference type="PROSITE" id="PS50886">
    <property type="entry name" value="TRBD"/>
    <property type="match status" value="1"/>
</dbReference>
<organism>
    <name type="scientific">Xanthomonas axonopodis pv. citri (strain 306)</name>
    <dbReference type="NCBI Taxonomy" id="190486"/>
    <lineage>
        <taxon>Bacteria</taxon>
        <taxon>Pseudomonadati</taxon>
        <taxon>Pseudomonadota</taxon>
        <taxon>Gammaproteobacteria</taxon>
        <taxon>Lysobacterales</taxon>
        <taxon>Lysobacteraceae</taxon>
        <taxon>Xanthomonas</taxon>
    </lineage>
</organism>
<keyword id="KW-0002">3D-structure</keyword>
<keyword id="KW-0030">Aminoacyl-tRNA synthetase</keyword>
<keyword id="KW-0067">ATP-binding</keyword>
<keyword id="KW-0963">Cytoplasm</keyword>
<keyword id="KW-0436">Ligase</keyword>
<keyword id="KW-0479">Metal-binding</keyword>
<keyword id="KW-0547">Nucleotide-binding</keyword>
<keyword id="KW-0648">Protein biosynthesis</keyword>
<keyword id="KW-0694">RNA-binding</keyword>
<keyword id="KW-0820">tRNA-binding</keyword>
<keyword id="KW-0862">Zinc</keyword>
<reference key="1">
    <citation type="journal article" date="2002" name="Nature">
        <title>Comparison of the genomes of two Xanthomonas pathogens with differing host specificities.</title>
        <authorList>
            <person name="da Silva A.C.R."/>
            <person name="Ferro J.A."/>
            <person name="Reinach F.C."/>
            <person name="Farah C.S."/>
            <person name="Furlan L.R."/>
            <person name="Quaggio R.B."/>
            <person name="Monteiro-Vitorello C.B."/>
            <person name="Van Sluys M.A."/>
            <person name="Almeida N.F. Jr."/>
            <person name="Alves L.M.C."/>
            <person name="do Amaral A.M."/>
            <person name="Bertolini M.C."/>
            <person name="Camargo L.E.A."/>
            <person name="Camarotte G."/>
            <person name="Cannavan F."/>
            <person name="Cardozo J."/>
            <person name="Chambergo F."/>
            <person name="Ciapina L.P."/>
            <person name="Cicarelli R.M.B."/>
            <person name="Coutinho L.L."/>
            <person name="Cursino-Santos J.R."/>
            <person name="El-Dorry H."/>
            <person name="Faria J.B."/>
            <person name="Ferreira A.J.S."/>
            <person name="Ferreira R.C.C."/>
            <person name="Ferro M.I.T."/>
            <person name="Formighieri E.F."/>
            <person name="Franco M.C."/>
            <person name="Greggio C.C."/>
            <person name="Gruber A."/>
            <person name="Katsuyama A.M."/>
            <person name="Kishi L.T."/>
            <person name="Leite R.P."/>
            <person name="Lemos E.G.M."/>
            <person name="Lemos M.V.F."/>
            <person name="Locali E.C."/>
            <person name="Machado M.A."/>
            <person name="Madeira A.M.B.N."/>
            <person name="Martinez-Rossi N.M."/>
            <person name="Martins E.C."/>
            <person name="Meidanis J."/>
            <person name="Menck C.F.M."/>
            <person name="Miyaki C.Y."/>
            <person name="Moon D.H."/>
            <person name="Moreira L.M."/>
            <person name="Novo M.T.M."/>
            <person name="Okura V.K."/>
            <person name="Oliveira M.C."/>
            <person name="Oliveira V.R."/>
            <person name="Pereira H.A."/>
            <person name="Rossi A."/>
            <person name="Sena J.A.D."/>
            <person name="Silva C."/>
            <person name="de Souza R.F."/>
            <person name="Spinola L.A.F."/>
            <person name="Takita M.A."/>
            <person name="Tamura R.E."/>
            <person name="Teixeira E.C."/>
            <person name="Tezza R.I.D."/>
            <person name="Trindade dos Santos M."/>
            <person name="Truffi D."/>
            <person name="Tsai S.M."/>
            <person name="White F.F."/>
            <person name="Setubal J.C."/>
            <person name="Kitajima J.P."/>
        </authorList>
    </citation>
    <scope>NUCLEOTIDE SEQUENCE [LARGE SCALE GENOMIC DNA]</scope>
    <source>
        <strain>306</strain>
    </source>
</reference>
<sequence length="694" mass="75338">MTRTALVTTALPYANGPLHLGHLVGYIQADIWVRARRLRGDKTWFVCADDTHGTPIMLAAEKAGVTPEAFIANVQASHERDFAAFGVTFDHYDSTNSPVNRELTEAFYAKLEAAGHISRRSVAQFYDTAKGMFLPDRYIKGICPNCGSPDQYGDNCEVCGATYAPTELKEPKSVISGATPELRDSEHFFFEVGHFDGFLREWLAGDVALPGVKAKLKEWLDAEGGLRAWDISRDAPYFGFQIPGQPGKYFYVWLDAPIGYLCSFKTLCAQMGENFEAHLVAGTQTELHHFIGKDIVNFHGLFWPAVLHGTGHRAPTRLHVNGYLTVDGAKMSKSRGTFVMARTFLDVGLEPEALRYYFAAKSSGGVDDLDLNLGDFIARVNADLVGKFVNLASRCAGFIGKRFDGKLADALPDAAQYDRFVAALAPIREAYERNDAASAIRQTMALADEANKYIDDTKPWVIAKQDGADAQLQSVCTQGLNLFRILVAALKPILPRTCAEAEAFLSAPMTSWEDVIGPLTAHTIQPYTALFTRIDPKLIDAMTDASKDTLAAPATPATASKPAPAKADAKPAAAANPQSPIATPGFIGMDDFAKLDLRIGKVLACEFVEGSDKLLRFELDAGELGTRQIFSGIRASYREPETLVGRSVVFIANLAPRKMRFGISEGMILSAGFDGGALALLDADSGAQPGMPVR</sequence>